<sequence length="202" mass="23381">MSRYRGPRVRIIRRLGTLPGLTNKTSKLKSSSINQSTSNKKISQYRIRLEEKQKLRFHYGITERQLLNYVRIARKAKGSTGEVLLQLLEMRSDNVIFRLGMAPTIPGARQLVNHRHILVNDCIVDIPSYRCKPQDFITIKNQPKSETMISKNIELYQKSKVPNHLTYSSLEKKGLVNQILDRESIGLKINELLVVEYYSRQA</sequence>
<feature type="chain" id="PRO_0000132534" description="Small ribosomal subunit protein uS4c">
    <location>
        <begin position="1"/>
        <end position="202"/>
    </location>
</feature>
<feature type="domain" description="S4 RNA-binding">
    <location>
        <begin position="90"/>
        <end position="158"/>
    </location>
</feature>
<evidence type="ECO:0000250" key="1"/>
<evidence type="ECO:0000305" key="2"/>
<geneLocation type="chloroplast"/>
<accession>Q9FTC7</accession>
<comment type="function">
    <text evidence="1">One of the primary rRNA binding proteins, it binds directly to 16S rRNA where it nucleates assembly of the body of the 30S subunit.</text>
</comment>
<comment type="function">
    <text evidence="1">With S5 and S12 plays an important role in translational accuracy.</text>
</comment>
<comment type="subunit">
    <text evidence="1">Part of the 30S ribosomal subunit. Contacts protein S5. The interaction surface between S4 and S5 is involved in control of translational fidelity (By similarity).</text>
</comment>
<comment type="subcellular location">
    <subcellularLocation>
        <location>Plastid</location>
        <location>Chloroplast</location>
    </subcellularLocation>
</comment>
<comment type="similarity">
    <text evidence="2">Belongs to the universal ribosomal protein uS4 family.</text>
</comment>
<organism>
    <name type="scientific">Anthoceros punctatus</name>
    <name type="common">Hornwort</name>
    <dbReference type="NCBI Taxonomy" id="3234"/>
    <lineage>
        <taxon>Eukaryota</taxon>
        <taxon>Viridiplantae</taxon>
        <taxon>Streptophyta</taxon>
        <taxon>Embryophyta</taxon>
        <taxon>Anthocerotophyta</taxon>
        <taxon>Anthocerotopsida</taxon>
        <taxon>Anthocerotidae</taxon>
        <taxon>Anthocerotales</taxon>
        <taxon>Anthocerotaceae</taxon>
        <taxon>Anthoceros</taxon>
    </lineage>
</organism>
<reference key="1">
    <citation type="submission" date="1999-10" db="EMBL/GenBank/DDBJ databases">
        <title>A molecular approach to bryophyte systematics.</title>
        <authorList>
            <person name="Capesius I."/>
            <person name="Bloecher R."/>
        </authorList>
    </citation>
    <scope>NUCLEOTIDE SEQUENCE [GENOMIC DNA]</scope>
    <source>
        <tissue>Gametophyte</tissue>
    </source>
</reference>
<gene>
    <name type="primary">rps4</name>
</gene>
<proteinExistence type="inferred from homology"/>
<keyword id="KW-0150">Chloroplast</keyword>
<keyword id="KW-0934">Plastid</keyword>
<keyword id="KW-0687">Ribonucleoprotein</keyword>
<keyword id="KW-0689">Ribosomal protein</keyword>
<keyword id="KW-0694">RNA-binding</keyword>
<keyword id="KW-0699">rRNA-binding</keyword>
<protein>
    <recommendedName>
        <fullName evidence="2">Small ribosomal subunit protein uS4c</fullName>
    </recommendedName>
    <alternativeName>
        <fullName>30S ribosomal protein S4, chloroplastic</fullName>
    </alternativeName>
</protein>
<dbReference type="EMBL" id="AJ250117">
    <property type="protein sequence ID" value="CAC07204.1"/>
    <property type="molecule type" value="Genomic_DNA"/>
</dbReference>
<dbReference type="SMR" id="Q9FTC7"/>
<dbReference type="GO" id="GO:0009507">
    <property type="term" value="C:chloroplast"/>
    <property type="evidence" value="ECO:0007669"/>
    <property type="project" value="UniProtKB-SubCell"/>
</dbReference>
<dbReference type="GO" id="GO:0015935">
    <property type="term" value="C:small ribosomal subunit"/>
    <property type="evidence" value="ECO:0007669"/>
    <property type="project" value="InterPro"/>
</dbReference>
<dbReference type="GO" id="GO:0019843">
    <property type="term" value="F:rRNA binding"/>
    <property type="evidence" value="ECO:0007669"/>
    <property type="project" value="UniProtKB-UniRule"/>
</dbReference>
<dbReference type="GO" id="GO:0003735">
    <property type="term" value="F:structural constituent of ribosome"/>
    <property type="evidence" value="ECO:0007669"/>
    <property type="project" value="InterPro"/>
</dbReference>
<dbReference type="GO" id="GO:0042274">
    <property type="term" value="P:ribosomal small subunit biogenesis"/>
    <property type="evidence" value="ECO:0007669"/>
    <property type="project" value="TreeGrafter"/>
</dbReference>
<dbReference type="GO" id="GO:0006412">
    <property type="term" value="P:translation"/>
    <property type="evidence" value="ECO:0007669"/>
    <property type="project" value="UniProtKB-UniRule"/>
</dbReference>
<dbReference type="CDD" id="cd00165">
    <property type="entry name" value="S4"/>
    <property type="match status" value="1"/>
</dbReference>
<dbReference type="FunFam" id="1.10.1050.10:FF:000002">
    <property type="entry name" value="30S ribosomal protein S4, chloroplastic"/>
    <property type="match status" value="1"/>
</dbReference>
<dbReference type="FunFam" id="3.10.290.10:FF:000081">
    <property type="entry name" value="30S ribosomal protein S4, chloroplastic"/>
    <property type="match status" value="1"/>
</dbReference>
<dbReference type="Gene3D" id="1.10.1050.10">
    <property type="entry name" value="Ribosomal Protein S4 Delta 41, Chain A, domain 1"/>
    <property type="match status" value="1"/>
</dbReference>
<dbReference type="Gene3D" id="3.10.290.10">
    <property type="entry name" value="RNA-binding S4 domain"/>
    <property type="match status" value="1"/>
</dbReference>
<dbReference type="HAMAP" id="MF_01306_B">
    <property type="entry name" value="Ribosomal_uS4_B"/>
    <property type="match status" value="1"/>
</dbReference>
<dbReference type="InterPro" id="IPR022801">
    <property type="entry name" value="Ribosomal_uS4"/>
</dbReference>
<dbReference type="InterPro" id="IPR005709">
    <property type="entry name" value="Ribosomal_uS4_bac-type"/>
</dbReference>
<dbReference type="InterPro" id="IPR001912">
    <property type="entry name" value="Ribosomal_uS4_N"/>
</dbReference>
<dbReference type="InterPro" id="IPR002942">
    <property type="entry name" value="S4_RNA-bd"/>
</dbReference>
<dbReference type="InterPro" id="IPR036986">
    <property type="entry name" value="S4_RNA-bd_sf"/>
</dbReference>
<dbReference type="NCBIfam" id="NF003717">
    <property type="entry name" value="PRK05327.1"/>
    <property type="match status" value="1"/>
</dbReference>
<dbReference type="NCBIfam" id="TIGR01017">
    <property type="entry name" value="rpsD_bact"/>
    <property type="match status" value="1"/>
</dbReference>
<dbReference type="PANTHER" id="PTHR11831">
    <property type="entry name" value="30S 40S RIBOSOMAL PROTEIN"/>
    <property type="match status" value="1"/>
</dbReference>
<dbReference type="PANTHER" id="PTHR11831:SF4">
    <property type="entry name" value="SMALL RIBOSOMAL SUBUNIT PROTEIN US4M"/>
    <property type="match status" value="1"/>
</dbReference>
<dbReference type="Pfam" id="PF00163">
    <property type="entry name" value="Ribosomal_S4"/>
    <property type="match status" value="1"/>
</dbReference>
<dbReference type="Pfam" id="PF01479">
    <property type="entry name" value="S4"/>
    <property type="match status" value="1"/>
</dbReference>
<dbReference type="SMART" id="SM01390">
    <property type="entry name" value="Ribosomal_S4"/>
    <property type="match status" value="1"/>
</dbReference>
<dbReference type="SMART" id="SM00363">
    <property type="entry name" value="S4"/>
    <property type="match status" value="1"/>
</dbReference>
<dbReference type="SUPFAM" id="SSF55174">
    <property type="entry name" value="Alpha-L RNA-binding motif"/>
    <property type="match status" value="1"/>
</dbReference>
<dbReference type="PROSITE" id="PS50889">
    <property type="entry name" value="S4"/>
    <property type="match status" value="1"/>
</dbReference>
<name>RR4_ANTPU</name>